<name>FTHS_CUTAK</name>
<reference key="1">
    <citation type="journal article" date="2004" name="Science">
        <title>The complete genome sequence of Propionibacterium acnes, a commensal of human skin.</title>
        <authorList>
            <person name="Brueggemann H."/>
            <person name="Henne A."/>
            <person name="Hoster F."/>
            <person name="Liesegang H."/>
            <person name="Wiezer A."/>
            <person name="Strittmatter A."/>
            <person name="Hujer S."/>
            <person name="Duerre P."/>
            <person name="Gottschalk G."/>
        </authorList>
    </citation>
    <scope>NUCLEOTIDE SEQUENCE [LARGE SCALE GENOMIC DNA]</scope>
    <source>
        <strain>DSM 16379 / KPA171202</strain>
    </source>
</reference>
<proteinExistence type="inferred from homology"/>
<sequence length="563" mass="59660">MKSDLEIAREAHLDPIEKVAARAGIDEKYLEPYGRGVAKVDLDVVTHNRDHSCGKYVVVTAMTPTPLGEGKTTTAVGLAQGLEKIGKHSVLALRQPSMGPTFGIKGGAAGAGYSQVLPMEKLNLHLTGDFHAIGAAHNLLAAMIDNHLHQGNELDIEPHSISWRRVVDINDRALRNTIVGLGSRVDGVPRETGFDITAASEVGVILSLATSLSDLRARLGRIVIGYNRSKEPVSAEDLHAAGSMAVILKDALKPNLLQTTENSPVLVHAGPFGNIATGNSSVIADRVGIGCGDYLLTEAGFGADMGAERFFNIKCRIGGMRPDAAVLVATVRALKTHAGRYKVIPGKPLPPAMLEDNPDDVLAGAANLRKHIEIVREFGVSPIVALNVFPTDHPDEIDAVRKVAEAAGAHFASSTHVVDGGDGAVDLAHAVVAACDHKADFRYTYDLEDSLVEKLTKVATKVYGADGIDIAPAAAKELAHFEDLGYGTFPVVIAKTHLSLSHDPSLKGAPTGWRLPVREVRAAVGAGYIYAICGDMRTMPGLGRHPAAERIDIDDNGETIGLF</sequence>
<dbReference type="EC" id="6.3.4.3" evidence="1"/>
<dbReference type="EMBL" id="AE017283">
    <property type="protein sequence ID" value="AAT81808.1"/>
    <property type="status" value="ALT_INIT"/>
    <property type="molecule type" value="Genomic_DNA"/>
</dbReference>
<dbReference type="SMR" id="Q6ABS5"/>
<dbReference type="EnsemblBacteria" id="AAT81808">
    <property type="protein sequence ID" value="AAT81808"/>
    <property type="gene ID" value="PPA0049"/>
</dbReference>
<dbReference type="KEGG" id="pac:PPA0049"/>
<dbReference type="eggNOG" id="COG2759">
    <property type="taxonomic scope" value="Bacteria"/>
</dbReference>
<dbReference type="HOGENOM" id="CLU_003601_3_3_11"/>
<dbReference type="UniPathway" id="UPA00193"/>
<dbReference type="Proteomes" id="UP000000603">
    <property type="component" value="Chromosome"/>
</dbReference>
<dbReference type="GO" id="GO:0005524">
    <property type="term" value="F:ATP binding"/>
    <property type="evidence" value="ECO:0007669"/>
    <property type="project" value="UniProtKB-UniRule"/>
</dbReference>
<dbReference type="GO" id="GO:0004329">
    <property type="term" value="F:formate-tetrahydrofolate ligase activity"/>
    <property type="evidence" value="ECO:0007669"/>
    <property type="project" value="UniProtKB-UniRule"/>
</dbReference>
<dbReference type="GO" id="GO:0035999">
    <property type="term" value="P:tetrahydrofolate interconversion"/>
    <property type="evidence" value="ECO:0007669"/>
    <property type="project" value="UniProtKB-UniRule"/>
</dbReference>
<dbReference type="CDD" id="cd00477">
    <property type="entry name" value="FTHFS"/>
    <property type="match status" value="1"/>
</dbReference>
<dbReference type="FunFam" id="3.30.1510.10:FF:000001">
    <property type="entry name" value="Formate--tetrahydrofolate ligase"/>
    <property type="match status" value="1"/>
</dbReference>
<dbReference type="FunFam" id="3.10.410.10:FF:000001">
    <property type="entry name" value="Putative formate--tetrahydrofolate ligase"/>
    <property type="match status" value="1"/>
</dbReference>
<dbReference type="Gene3D" id="3.30.1510.10">
    <property type="entry name" value="Domain 2, N(10)-formyltetrahydrofolate synthetase"/>
    <property type="match status" value="1"/>
</dbReference>
<dbReference type="Gene3D" id="3.10.410.10">
    <property type="entry name" value="Formyltetrahydrofolate synthetase, domain 3"/>
    <property type="match status" value="1"/>
</dbReference>
<dbReference type="Gene3D" id="3.40.50.300">
    <property type="entry name" value="P-loop containing nucleotide triphosphate hydrolases"/>
    <property type="match status" value="1"/>
</dbReference>
<dbReference type="HAMAP" id="MF_01543">
    <property type="entry name" value="FTHFS"/>
    <property type="match status" value="1"/>
</dbReference>
<dbReference type="InterPro" id="IPR000559">
    <property type="entry name" value="Formate_THF_ligase"/>
</dbReference>
<dbReference type="InterPro" id="IPR020628">
    <property type="entry name" value="Formate_THF_ligase_CS"/>
</dbReference>
<dbReference type="InterPro" id="IPR027417">
    <property type="entry name" value="P-loop_NTPase"/>
</dbReference>
<dbReference type="NCBIfam" id="NF010030">
    <property type="entry name" value="PRK13505.1"/>
    <property type="match status" value="1"/>
</dbReference>
<dbReference type="Pfam" id="PF01268">
    <property type="entry name" value="FTHFS"/>
    <property type="match status" value="1"/>
</dbReference>
<dbReference type="SUPFAM" id="SSF52540">
    <property type="entry name" value="P-loop containing nucleoside triphosphate hydrolases"/>
    <property type="match status" value="1"/>
</dbReference>
<dbReference type="PROSITE" id="PS00721">
    <property type="entry name" value="FTHFS_1"/>
    <property type="match status" value="1"/>
</dbReference>
<dbReference type="PROSITE" id="PS00722">
    <property type="entry name" value="FTHFS_2"/>
    <property type="match status" value="1"/>
</dbReference>
<evidence type="ECO:0000255" key="1">
    <source>
        <dbReference type="HAMAP-Rule" id="MF_01543"/>
    </source>
</evidence>
<evidence type="ECO:0000305" key="2"/>
<feature type="chain" id="PRO_0000199369" description="Formate--tetrahydrofolate ligase">
    <location>
        <begin position="1"/>
        <end position="563"/>
    </location>
</feature>
<feature type="binding site" evidence="1">
    <location>
        <begin position="65"/>
        <end position="72"/>
    </location>
    <ligand>
        <name>ATP</name>
        <dbReference type="ChEBI" id="CHEBI:30616"/>
    </ligand>
</feature>
<gene>
    <name evidence="1" type="primary">fhs</name>
    <name type="ordered locus">PPA0049</name>
</gene>
<accession>Q6ABS5</accession>
<keyword id="KW-0067">ATP-binding</keyword>
<keyword id="KW-0436">Ligase</keyword>
<keyword id="KW-0547">Nucleotide-binding</keyword>
<keyword id="KW-0554">One-carbon metabolism</keyword>
<comment type="catalytic activity">
    <reaction evidence="1">
        <text>(6S)-5,6,7,8-tetrahydrofolate + formate + ATP = (6R)-10-formyltetrahydrofolate + ADP + phosphate</text>
        <dbReference type="Rhea" id="RHEA:20221"/>
        <dbReference type="ChEBI" id="CHEBI:15740"/>
        <dbReference type="ChEBI" id="CHEBI:30616"/>
        <dbReference type="ChEBI" id="CHEBI:43474"/>
        <dbReference type="ChEBI" id="CHEBI:57453"/>
        <dbReference type="ChEBI" id="CHEBI:195366"/>
        <dbReference type="ChEBI" id="CHEBI:456216"/>
        <dbReference type="EC" id="6.3.4.3"/>
    </reaction>
</comment>
<comment type="pathway">
    <text evidence="1">One-carbon metabolism; tetrahydrofolate interconversion.</text>
</comment>
<comment type="similarity">
    <text evidence="1">Belongs to the formate--tetrahydrofolate ligase family.</text>
</comment>
<comment type="sequence caution" evidence="2">
    <conflict type="erroneous initiation">
        <sequence resource="EMBL-CDS" id="AAT81808"/>
    </conflict>
</comment>
<organism>
    <name type="scientific">Cutibacterium acnes (strain DSM 16379 / KPA171202)</name>
    <name type="common">Propionibacterium acnes</name>
    <dbReference type="NCBI Taxonomy" id="267747"/>
    <lineage>
        <taxon>Bacteria</taxon>
        <taxon>Bacillati</taxon>
        <taxon>Actinomycetota</taxon>
        <taxon>Actinomycetes</taxon>
        <taxon>Propionibacteriales</taxon>
        <taxon>Propionibacteriaceae</taxon>
        <taxon>Cutibacterium</taxon>
    </lineage>
</organism>
<protein>
    <recommendedName>
        <fullName evidence="1">Formate--tetrahydrofolate ligase</fullName>
        <ecNumber evidence="1">6.3.4.3</ecNumber>
    </recommendedName>
    <alternativeName>
        <fullName evidence="1">Formyltetrahydrofolate synthetase</fullName>
        <shortName evidence="1">FHS</shortName>
        <shortName evidence="1">FTHFS</shortName>
    </alternativeName>
</protein>